<proteinExistence type="inferred from homology"/>
<accession>Q5H4D1</accession>
<gene>
    <name evidence="1" type="primary">leuC</name>
    <name type="ordered locus">XOO0936</name>
</gene>
<comment type="function">
    <text evidence="1">Catalyzes the isomerization between 2-isopropylmalate and 3-isopropylmalate, via the formation of 2-isopropylmaleate.</text>
</comment>
<comment type="catalytic activity">
    <reaction evidence="1">
        <text>(2R,3S)-3-isopropylmalate = (2S)-2-isopropylmalate</text>
        <dbReference type="Rhea" id="RHEA:32287"/>
        <dbReference type="ChEBI" id="CHEBI:1178"/>
        <dbReference type="ChEBI" id="CHEBI:35121"/>
        <dbReference type="EC" id="4.2.1.33"/>
    </reaction>
</comment>
<comment type="cofactor">
    <cofactor evidence="1">
        <name>[4Fe-4S] cluster</name>
        <dbReference type="ChEBI" id="CHEBI:49883"/>
    </cofactor>
    <text evidence="1">Binds 1 [4Fe-4S] cluster per subunit.</text>
</comment>
<comment type="pathway">
    <text evidence="1">Amino-acid biosynthesis; L-leucine biosynthesis; L-leucine from 3-methyl-2-oxobutanoate: step 2/4.</text>
</comment>
<comment type="subunit">
    <text evidence="1">Heterodimer of LeuC and LeuD.</text>
</comment>
<comment type="similarity">
    <text evidence="1">Belongs to the aconitase/IPM isomerase family. LeuC type 1 subfamily.</text>
</comment>
<evidence type="ECO:0000255" key="1">
    <source>
        <dbReference type="HAMAP-Rule" id="MF_01026"/>
    </source>
</evidence>
<dbReference type="EC" id="4.2.1.33" evidence="1"/>
<dbReference type="EMBL" id="AE013598">
    <property type="protein sequence ID" value="AAW74190.1"/>
    <property type="molecule type" value="Genomic_DNA"/>
</dbReference>
<dbReference type="SMR" id="Q5H4D1"/>
<dbReference type="STRING" id="291331.XOO0936"/>
<dbReference type="KEGG" id="xoo:XOO0936"/>
<dbReference type="HOGENOM" id="CLU_006714_3_4_6"/>
<dbReference type="UniPathway" id="UPA00048">
    <property type="reaction ID" value="UER00071"/>
</dbReference>
<dbReference type="Proteomes" id="UP000006735">
    <property type="component" value="Chromosome"/>
</dbReference>
<dbReference type="GO" id="GO:0003861">
    <property type="term" value="F:3-isopropylmalate dehydratase activity"/>
    <property type="evidence" value="ECO:0007669"/>
    <property type="project" value="UniProtKB-UniRule"/>
</dbReference>
<dbReference type="GO" id="GO:0051539">
    <property type="term" value="F:4 iron, 4 sulfur cluster binding"/>
    <property type="evidence" value="ECO:0007669"/>
    <property type="project" value="UniProtKB-KW"/>
</dbReference>
<dbReference type="GO" id="GO:0046872">
    <property type="term" value="F:metal ion binding"/>
    <property type="evidence" value="ECO:0007669"/>
    <property type="project" value="UniProtKB-KW"/>
</dbReference>
<dbReference type="GO" id="GO:0009098">
    <property type="term" value="P:L-leucine biosynthetic process"/>
    <property type="evidence" value="ECO:0007669"/>
    <property type="project" value="UniProtKB-UniRule"/>
</dbReference>
<dbReference type="CDD" id="cd01583">
    <property type="entry name" value="IPMI"/>
    <property type="match status" value="1"/>
</dbReference>
<dbReference type="FunFam" id="3.30.499.10:FF:000007">
    <property type="entry name" value="3-isopropylmalate dehydratase large subunit"/>
    <property type="match status" value="1"/>
</dbReference>
<dbReference type="Gene3D" id="3.30.499.10">
    <property type="entry name" value="Aconitase, domain 3"/>
    <property type="match status" value="2"/>
</dbReference>
<dbReference type="HAMAP" id="MF_01026">
    <property type="entry name" value="LeuC_type1"/>
    <property type="match status" value="1"/>
</dbReference>
<dbReference type="InterPro" id="IPR004430">
    <property type="entry name" value="3-IsopropMal_deHydase_lsu"/>
</dbReference>
<dbReference type="InterPro" id="IPR015931">
    <property type="entry name" value="Acnase/IPM_dHydase_lsu_aba_1/3"/>
</dbReference>
<dbReference type="InterPro" id="IPR001030">
    <property type="entry name" value="Acoase/IPM_deHydtase_lsu_aba"/>
</dbReference>
<dbReference type="InterPro" id="IPR018136">
    <property type="entry name" value="Aconitase_4Fe-4S_BS"/>
</dbReference>
<dbReference type="InterPro" id="IPR036008">
    <property type="entry name" value="Aconitase_4Fe-4S_dom"/>
</dbReference>
<dbReference type="InterPro" id="IPR050067">
    <property type="entry name" value="IPM_dehydratase_rel_enz"/>
</dbReference>
<dbReference type="InterPro" id="IPR033941">
    <property type="entry name" value="IPMI_cat"/>
</dbReference>
<dbReference type="NCBIfam" id="TIGR00170">
    <property type="entry name" value="leuC"/>
    <property type="match status" value="1"/>
</dbReference>
<dbReference type="NCBIfam" id="NF004016">
    <property type="entry name" value="PRK05478.1"/>
    <property type="match status" value="1"/>
</dbReference>
<dbReference type="NCBIfam" id="NF009116">
    <property type="entry name" value="PRK12466.1"/>
    <property type="match status" value="1"/>
</dbReference>
<dbReference type="PANTHER" id="PTHR43822:SF9">
    <property type="entry name" value="3-ISOPROPYLMALATE DEHYDRATASE"/>
    <property type="match status" value="1"/>
</dbReference>
<dbReference type="PANTHER" id="PTHR43822">
    <property type="entry name" value="HOMOACONITASE, MITOCHONDRIAL-RELATED"/>
    <property type="match status" value="1"/>
</dbReference>
<dbReference type="Pfam" id="PF00330">
    <property type="entry name" value="Aconitase"/>
    <property type="match status" value="1"/>
</dbReference>
<dbReference type="PRINTS" id="PR00415">
    <property type="entry name" value="ACONITASE"/>
</dbReference>
<dbReference type="SUPFAM" id="SSF53732">
    <property type="entry name" value="Aconitase iron-sulfur domain"/>
    <property type="match status" value="1"/>
</dbReference>
<dbReference type="PROSITE" id="PS00450">
    <property type="entry name" value="ACONITASE_1"/>
    <property type="match status" value="1"/>
</dbReference>
<dbReference type="PROSITE" id="PS01244">
    <property type="entry name" value="ACONITASE_2"/>
    <property type="match status" value="1"/>
</dbReference>
<name>LEUC_XANOR</name>
<reference key="1">
    <citation type="journal article" date="2005" name="Nucleic Acids Res.">
        <title>The genome sequence of Xanthomonas oryzae pathovar oryzae KACC10331, the bacterial blight pathogen of rice.</title>
        <authorList>
            <person name="Lee B.-M."/>
            <person name="Park Y.-J."/>
            <person name="Park D.-S."/>
            <person name="Kang H.-W."/>
            <person name="Kim J.-G."/>
            <person name="Song E.-S."/>
            <person name="Park I.-C."/>
            <person name="Yoon U.-H."/>
            <person name="Hahn J.-H."/>
            <person name="Koo B.-S."/>
            <person name="Lee G.-B."/>
            <person name="Kim H."/>
            <person name="Park H.-S."/>
            <person name="Yoon K.-O."/>
            <person name="Kim J.-H."/>
            <person name="Jung C.-H."/>
            <person name="Koh N.-H."/>
            <person name="Seo J.-S."/>
            <person name="Go S.-J."/>
        </authorList>
    </citation>
    <scope>NUCLEOTIDE SEQUENCE [LARGE SCALE GENOMIC DNA]</scope>
    <source>
        <strain>KACC10331 / KXO85</strain>
    </source>
</reference>
<keyword id="KW-0004">4Fe-4S</keyword>
<keyword id="KW-0028">Amino-acid biosynthesis</keyword>
<keyword id="KW-0100">Branched-chain amino acid biosynthesis</keyword>
<keyword id="KW-0408">Iron</keyword>
<keyword id="KW-0411">Iron-sulfur</keyword>
<keyword id="KW-0432">Leucine biosynthesis</keyword>
<keyword id="KW-0456">Lyase</keyword>
<keyword id="KW-0479">Metal-binding</keyword>
<keyword id="KW-1185">Reference proteome</keyword>
<organism>
    <name type="scientific">Xanthomonas oryzae pv. oryzae (strain KACC10331 / KXO85)</name>
    <dbReference type="NCBI Taxonomy" id="291331"/>
    <lineage>
        <taxon>Bacteria</taxon>
        <taxon>Pseudomonadati</taxon>
        <taxon>Pseudomonadota</taxon>
        <taxon>Gammaproteobacteria</taxon>
        <taxon>Lysobacterales</taxon>
        <taxon>Lysobacteraceae</taxon>
        <taxon>Xanthomonas</taxon>
    </lineage>
</organism>
<feature type="chain" id="PRO_0000076845" description="3-isopropylmalate dehydratase large subunit">
    <location>
        <begin position="1"/>
        <end position="482"/>
    </location>
</feature>
<feature type="binding site" evidence="1">
    <location>
        <position position="353"/>
    </location>
    <ligand>
        <name>[4Fe-4S] cluster</name>
        <dbReference type="ChEBI" id="CHEBI:49883"/>
    </ligand>
</feature>
<feature type="binding site" evidence="1">
    <location>
        <position position="414"/>
    </location>
    <ligand>
        <name>[4Fe-4S] cluster</name>
        <dbReference type="ChEBI" id="CHEBI:49883"/>
    </ligand>
</feature>
<feature type="binding site" evidence="1">
    <location>
        <position position="417"/>
    </location>
    <ligand>
        <name>[4Fe-4S] cluster</name>
        <dbReference type="ChEBI" id="CHEBI:49883"/>
    </ligand>
</feature>
<sequence length="482" mass="51560">MTAKTLYDKLWEMHEVTRRDDGSSLIYIDRHILHEVTSPQAFEGLRLAGRNPWRIDANIATPDHNVPTTRAERQGGLESISDEVSRLQVQTLDENCDDFGILEFKMNDARQGIVHVVGPEQGATLPGMTVVCGDSHTSTHGAFGALAHGIGTSEVEHVLATQCLITKKMKNLQVRVEGTLPFGVTAKDIVLAVIGKIGTAGGNGHALEFAGSAIRALSMEGRMTICNMSIEAGARVGMVAVDEKTIAYVKGRPFAPKGADWDAAVALWSTLVSDPDAHFDTVVELHAEDIKPQVSWGTSPEMVLAIDQHVPDPATEQDPTKRNSIERALKYMGLKANQAITDIRLDRVFIGSCTNSRIEDLRAAAAVAKGRKVASTIKQALVVPGSGLVKAQAEAEGLDKVFLDAGFEWREPGCSMCLAMNPDKLGSGEHCASTSNRNFEGRQGAGGRTHLVSPAMAAAAAVSGHFVDVRELGDSGVGIRDS</sequence>
<protein>
    <recommendedName>
        <fullName evidence="1">3-isopropylmalate dehydratase large subunit</fullName>
        <ecNumber evidence="1">4.2.1.33</ecNumber>
    </recommendedName>
    <alternativeName>
        <fullName evidence="1">Alpha-IPM isomerase</fullName>
        <shortName evidence="1">IPMI</shortName>
    </alternativeName>
    <alternativeName>
        <fullName evidence="1">Isopropylmalate isomerase</fullName>
    </alternativeName>
</protein>